<accession>B1XFB3</accession>
<proteinExistence type="inferred from homology"/>
<name>YGGU_ECODH</name>
<gene>
    <name evidence="1" type="primary">yggU</name>
    <name type="ordered locus">ECDH10B_3128</name>
</gene>
<protein>
    <recommendedName>
        <fullName evidence="1">UPF0235 protein YggU</fullName>
    </recommendedName>
</protein>
<sequence length="96" mass="10456">MNAVTVNDDGLVLRLYIQPKASRDSIVGLHGDEVKVAITAPPVDGQANSHLVKFLGKQFRVAKSQVVIEKGELGRHKQIKIINPQQIPPEIAALIN</sequence>
<organism>
    <name type="scientific">Escherichia coli (strain K12 / DH10B)</name>
    <dbReference type="NCBI Taxonomy" id="316385"/>
    <lineage>
        <taxon>Bacteria</taxon>
        <taxon>Pseudomonadati</taxon>
        <taxon>Pseudomonadota</taxon>
        <taxon>Gammaproteobacteria</taxon>
        <taxon>Enterobacterales</taxon>
        <taxon>Enterobacteriaceae</taxon>
        <taxon>Escherichia</taxon>
    </lineage>
</organism>
<reference key="1">
    <citation type="journal article" date="2008" name="J. Bacteriol.">
        <title>The complete genome sequence of Escherichia coli DH10B: insights into the biology of a laboratory workhorse.</title>
        <authorList>
            <person name="Durfee T."/>
            <person name="Nelson R."/>
            <person name="Baldwin S."/>
            <person name="Plunkett G. III"/>
            <person name="Burland V."/>
            <person name="Mau B."/>
            <person name="Petrosino J.F."/>
            <person name="Qin X."/>
            <person name="Muzny D.M."/>
            <person name="Ayele M."/>
            <person name="Gibbs R.A."/>
            <person name="Csorgo B."/>
            <person name="Posfai G."/>
            <person name="Weinstock G.M."/>
            <person name="Blattner F.R."/>
        </authorList>
    </citation>
    <scope>NUCLEOTIDE SEQUENCE [LARGE SCALE GENOMIC DNA]</scope>
    <source>
        <strain>K12 / DH10B</strain>
    </source>
</reference>
<comment type="similarity">
    <text evidence="1">Belongs to the UPF0235 family.</text>
</comment>
<feature type="chain" id="PRO_1000130682" description="UPF0235 protein YggU">
    <location>
        <begin position="1"/>
        <end position="96"/>
    </location>
</feature>
<dbReference type="EMBL" id="CP000948">
    <property type="protein sequence ID" value="ACB04047.1"/>
    <property type="molecule type" value="Genomic_DNA"/>
</dbReference>
<dbReference type="RefSeq" id="WP_000994920.1">
    <property type="nucleotide sequence ID" value="NC_010473.1"/>
</dbReference>
<dbReference type="BMRB" id="B1XFB3"/>
<dbReference type="SMR" id="B1XFB3"/>
<dbReference type="KEGG" id="ecd:ECDH10B_3128"/>
<dbReference type="HOGENOM" id="CLU_130694_5_0_6"/>
<dbReference type="GO" id="GO:0005737">
    <property type="term" value="C:cytoplasm"/>
    <property type="evidence" value="ECO:0007669"/>
    <property type="project" value="TreeGrafter"/>
</dbReference>
<dbReference type="Gene3D" id="3.30.1200.10">
    <property type="entry name" value="YggU-like"/>
    <property type="match status" value="1"/>
</dbReference>
<dbReference type="HAMAP" id="MF_00634">
    <property type="entry name" value="UPF0235"/>
    <property type="match status" value="1"/>
</dbReference>
<dbReference type="InterPro" id="IPR003746">
    <property type="entry name" value="DUF167"/>
</dbReference>
<dbReference type="InterPro" id="IPR036591">
    <property type="entry name" value="YggU-like_sf"/>
</dbReference>
<dbReference type="NCBIfam" id="TIGR00251">
    <property type="entry name" value="DUF167 family protein"/>
    <property type="match status" value="1"/>
</dbReference>
<dbReference type="NCBIfam" id="NF003466">
    <property type="entry name" value="PRK05090.1"/>
    <property type="match status" value="1"/>
</dbReference>
<dbReference type="PANTHER" id="PTHR13420">
    <property type="entry name" value="UPF0235 PROTEIN C15ORF40"/>
    <property type="match status" value="1"/>
</dbReference>
<dbReference type="PANTHER" id="PTHR13420:SF7">
    <property type="entry name" value="UPF0235 PROTEIN C15ORF40"/>
    <property type="match status" value="1"/>
</dbReference>
<dbReference type="Pfam" id="PF02594">
    <property type="entry name" value="DUF167"/>
    <property type="match status" value="1"/>
</dbReference>
<dbReference type="SMART" id="SM01152">
    <property type="entry name" value="DUF167"/>
    <property type="match status" value="1"/>
</dbReference>
<dbReference type="SUPFAM" id="SSF69786">
    <property type="entry name" value="YggU-like"/>
    <property type="match status" value="1"/>
</dbReference>
<evidence type="ECO:0000255" key="1">
    <source>
        <dbReference type="HAMAP-Rule" id="MF_00634"/>
    </source>
</evidence>